<feature type="chain" id="PRO_1000022183" description="Valine--tRNA ligase">
    <location>
        <begin position="1"/>
        <end position="812"/>
    </location>
</feature>
<feature type="short sequence motif" description="'HIGH' region">
    <location>
        <begin position="46"/>
        <end position="56"/>
    </location>
</feature>
<feature type="short sequence motif" description="'KMSKS' region">
    <location>
        <begin position="536"/>
        <end position="540"/>
    </location>
</feature>
<feature type="binding site" evidence="1">
    <location>
        <position position="539"/>
    </location>
    <ligand>
        <name>ATP</name>
        <dbReference type="ChEBI" id="CHEBI:30616"/>
    </ligand>
</feature>
<name>SYV_RICB8</name>
<keyword id="KW-0030">Aminoacyl-tRNA synthetase</keyword>
<keyword id="KW-0067">ATP-binding</keyword>
<keyword id="KW-0963">Cytoplasm</keyword>
<keyword id="KW-0436">Ligase</keyword>
<keyword id="KW-0547">Nucleotide-binding</keyword>
<keyword id="KW-0648">Protein biosynthesis</keyword>
<comment type="function">
    <text evidence="1">Catalyzes the attachment of valine to tRNA(Val). As ValRS can inadvertently accommodate and process structurally similar amino acids such as threonine, to avoid such errors, it has a 'posttransfer' editing activity that hydrolyzes mischarged Thr-tRNA(Val) in a tRNA-dependent manner.</text>
</comment>
<comment type="catalytic activity">
    <reaction evidence="1">
        <text>tRNA(Val) + L-valine + ATP = L-valyl-tRNA(Val) + AMP + diphosphate</text>
        <dbReference type="Rhea" id="RHEA:10704"/>
        <dbReference type="Rhea" id="RHEA-COMP:9672"/>
        <dbReference type="Rhea" id="RHEA-COMP:9708"/>
        <dbReference type="ChEBI" id="CHEBI:30616"/>
        <dbReference type="ChEBI" id="CHEBI:33019"/>
        <dbReference type="ChEBI" id="CHEBI:57762"/>
        <dbReference type="ChEBI" id="CHEBI:78442"/>
        <dbReference type="ChEBI" id="CHEBI:78537"/>
        <dbReference type="ChEBI" id="CHEBI:456215"/>
        <dbReference type="EC" id="6.1.1.9"/>
    </reaction>
</comment>
<comment type="subunit">
    <text evidence="1">Monomer.</text>
</comment>
<comment type="subcellular location">
    <subcellularLocation>
        <location evidence="1">Cytoplasm</location>
    </subcellularLocation>
</comment>
<comment type="domain">
    <text evidence="1">ValRS has two distinct active sites: one for aminoacylation and one for editing. The misactivated threonine is translocated from the active site to the editing site.</text>
</comment>
<comment type="similarity">
    <text evidence="1">Belongs to the class-I aminoacyl-tRNA synthetase family. ValS type 2 subfamily.</text>
</comment>
<proteinExistence type="inferred from homology"/>
<gene>
    <name evidence="1" type="primary">valS</name>
    <name type="ordered locus">A1I_02925</name>
</gene>
<evidence type="ECO:0000255" key="1">
    <source>
        <dbReference type="HAMAP-Rule" id="MF_02005"/>
    </source>
</evidence>
<sequence>MKEFPKNYNFIESEKKWQKIWQEKQIYAYDENIAKDETFVVDTPPPTVSGQLHIGHVYSYTQTDFIVRFQRMMGKNIFYPMGFDDNGLPTERLVEKQRQVKAYNMGREELINICNEVVASEEEKFRSLFNQIALSVDWNLEYQTISPLSRKISQMSFLDLVKKGEVYRNNQPILWDPVDGTALAQADIEDKEKTSFMNYITFKTEANDEFTIATTRPELLPACVAVFYHPDDKRYQHLAGKFAVTPLFNVKVPLLADPLVQQDKGTGLVMCCTFGDQTDITWWKTHNLPLNTIITKKGTIDFPHEIGIDGLKIKEARAKIIDILKEQELFVKQEEITQTVKCAERSGAPLEVLTVPQWFVKTISHKDELLKRANELNWHPKNMKIRLDNWINAISWDWCISRQRYFGVPFPVWYSKRIGEEGKILYADISQLPVDPLKDLPIGYSKYEVEPDLDVMDTWATSSVSPQLSTWGISDEFAVNKDRHGKLFPMDLRPQAHEIIRTWAFYTILKAHLHQNTLPWKNIMVSGWCLAEDRSKMSKSKGNVLVPEKLLEQYGSDVIRYWSANSKLGADTAYSEDVMKNGKRLVNKLWNAAKFVSQHFDKLSDEDKKTNLIDVKEKITHEFDQWIINKLVELVNNATNELQNYEYANAMHLTEKFFWSVFCDNYLEISKTRAYDEENKNPSGQYSSVLTLYHVMQTLLKLFAPFMPHITEELYQILYSENSIHIKGNWINYGNLNYKIDAKQPERLLEILDHVRKFKAEKNLSIKAEVQLLEVSGIELSKELTSDLKNVTSAKEVKFKPTNDEIKVSILT</sequence>
<accession>A8GVS7</accession>
<protein>
    <recommendedName>
        <fullName evidence="1">Valine--tRNA ligase</fullName>
        <ecNumber evidence="1">6.1.1.9</ecNumber>
    </recommendedName>
    <alternativeName>
        <fullName evidence="1">Valyl-tRNA synthetase</fullName>
        <shortName evidence="1">ValRS</shortName>
    </alternativeName>
</protein>
<reference key="1">
    <citation type="submission" date="2007-09" db="EMBL/GenBank/DDBJ databases">
        <title>Complete genome sequencing of Rickettsia bellii.</title>
        <authorList>
            <person name="Madan A."/>
            <person name="Lee H."/>
            <person name="Madan A."/>
            <person name="Yoon J.-G."/>
            <person name="Ryu G.-Y."/>
            <person name="Dasch G."/>
            <person name="Ereemeva M."/>
        </authorList>
    </citation>
    <scope>NUCLEOTIDE SEQUENCE [LARGE SCALE GENOMIC DNA]</scope>
    <source>
        <strain>OSU 85-389</strain>
    </source>
</reference>
<dbReference type="EC" id="6.1.1.9" evidence="1"/>
<dbReference type="EMBL" id="CP000849">
    <property type="protein sequence ID" value="ABV78954.1"/>
    <property type="molecule type" value="Genomic_DNA"/>
</dbReference>
<dbReference type="RefSeq" id="WP_012151755.1">
    <property type="nucleotide sequence ID" value="NC_009883.1"/>
</dbReference>
<dbReference type="SMR" id="A8GVS7"/>
<dbReference type="KEGG" id="rbo:A1I_02925"/>
<dbReference type="HOGENOM" id="CLU_001493_0_2_5"/>
<dbReference type="GO" id="GO:0005829">
    <property type="term" value="C:cytosol"/>
    <property type="evidence" value="ECO:0007669"/>
    <property type="project" value="TreeGrafter"/>
</dbReference>
<dbReference type="GO" id="GO:0002161">
    <property type="term" value="F:aminoacyl-tRNA deacylase activity"/>
    <property type="evidence" value="ECO:0007669"/>
    <property type="project" value="InterPro"/>
</dbReference>
<dbReference type="GO" id="GO:0005524">
    <property type="term" value="F:ATP binding"/>
    <property type="evidence" value="ECO:0007669"/>
    <property type="project" value="UniProtKB-UniRule"/>
</dbReference>
<dbReference type="GO" id="GO:0004832">
    <property type="term" value="F:valine-tRNA ligase activity"/>
    <property type="evidence" value="ECO:0007669"/>
    <property type="project" value="UniProtKB-UniRule"/>
</dbReference>
<dbReference type="GO" id="GO:0006438">
    <property type="term" value="P:valyl-tRNA aminoacylation"/>
    <property type="evidence" value="ECO:0007669"/>
    <property type="project" value="UniProtKB-UniRule"/>
</dbReference>
<dbReference type="CDD" id="cd07962">
    <property type="entry name" value="Anticodon_Ia_Val"/>
    <property type="match status" value="1"/>
</dbReference>
<dbReference type="FunFam" id="1.10.730.10:FF:000033">
    <property type="entry name" value="Valine--tRNA ligase"/>
    <property type="match status" value="1"/>
</dbReference>
<dbReference type="FunFam" id="3.40.50.620:FF:000192">
    <property type="entry name" value="Valine--tRNA ligase"/>
    <property type="match status" value="1"/>
</dbReference>
<dbReference type="Gene3D" id="3.40.50.620">
    <property type="entry name" value="HUPs"/>
    <property type="match status" value="2"/>
</dbReference>
<dbReference type="Gene3D" id="1.10.730.10">
    <property type="entry name" value="Isoleucyl-tRNA Synthetase, Domain 1"/>
    <property type="match status" value="1"/>
</dbReference>
<dbReference type="HAMAP" id="MF_02005">
    <property type="entry name" value="Val_tRNA_synth_type2"/>
    <property type="match status" value="1"/>
</dbReference>
<dbReference type="InterPro" id="IPR001412">
    <property type="entry name" value="aa-tRNA-synth_I_CS"/>
</dbReference>
<dbReference type="InterPro" id="IPR002300">
    <property type="entry name" value="aa-tRNA-synth_Ia"/>
</dbReference>
<dbReference type="InterPro" id="IPR033705">
    <property type="entry name" value="Anticodon_Ia_Val"/>
</dbReference>
<dbReference type="InterPro" id="IPR013155">
    <property type="entry name" value="M/V/L/I-tRNA-synth_anticd-bd"/>
</dbReference>
<dbReference type="InterPro" id="IPR014729">
    <property type="entry name" value="Rossmann-like_a/b/a_fold"/>
</dbReference>
<dbReference type="InterPro" id="IPR009080">
    <property type="entry name" value="tRNAsynth_Ia_anticodon-bd"/>
</dbReference>
<dbReference type="InterPro" id="IPR009008">
    <property type="entry name" value="Val/Leu/Ile-tRNA-synth_edit"/>
</dbReference>
<dbReference type="InterPro" id="IPR022874">
    <property type="entry name" value="Valine-tRNA_ligase_type_2"/>
</dbReference>
<dbReference type="InterPro" id="IPR002303">
    <property type="entry name" value="Valyl-tRNA_ligase"/>
</dbReference>
<dbReference type="NCBIfam" id="NF009687">
    <property type="entry name" value="PRK13208.1"/>
    <property type="match status" value="1"/>
</dbReference>
<dbReference type="NCBIfam" id="TIGR00422">
    <property type="entry name" value="valS"/>
    <property type="match status" value="1"/>
</dbReference>
<dbReference type="PANTHER" id="PTHR11946:SF93">
    <property type="entry name" value="VALINE--TRNA LIGASE, CHLOROPLASTIC_MITOCHONDRIAL 2"/>
    <property type="match status" value="1"/>
</dbReference>
<dbReference type="PANTHER" id="PTHR11946">
    <property type="entry name" value="VALYL-TRNA SYNTHETASES"/>
    <property type="match status" value="1"/>
</dbReference>
<dbReference type="Pfam" id="PF08264">
    <property type="entry name" value="Anticodon_1"/>
    <property type="match status" value="1"/>
</dbReference>
<dbReference type="Pfam" id="PF00133">
    <property type="entry name" value="tRNA-synt_1"/>
    <property type="match status" value="1"/>
</dbReference>
<dbReference type="PRINTS" id="PR00986">
    <property type="entry name" value="TRNASYNTHVAL"/>
</dbReference>
<dbReference type="SUPFAM" id="SSF47323">
    <property type="entry name" value="Anticodon-binding domain of a subclass of class I aminoacyl-tRNA synthetases"/>
    <property type="match status" value="1"/>
</dbReference>
<dbReference type="SUPFAM" id="SSF52374">
    <property type="entry name" value="Nucleotidylyl transferase"/>
    <property type="match status" value="1"/>
</dbReference>
<dbReference type="SUPFAM" id="SSF50677">
    <property type="entry name" value="ValRS/IleRS/LeuRS editing domain"/>
    <property type="match status" value="1"/>
</dbReference>
<dbReference type="PROSITE" id="PS00178">
    <property type="entry name" value="AA_TRNA_LIGASE_I"/>
    <property type="match status" value="1"/>
</dbReference>
<organism>
    <name type="scientific">Rickettsia bellii (strain OSU 85-389)</name>
    <dbReference type="NCBI Taxonomy" id="391896"/>
    <lineage>
        <taxon>Bacteria</taxon>
        <taxon>Pseudomonadati</taxon>
        <taxon>Pseudomonadota</taxon>
        <taxon>Alphaproteobacteria</taxon>
        <taxon>Rickettsiales</taxon>
        <taxon>Rickettsiaceae</taxon>
        <taxon>Rickettsieae</taxon>
        <taxon>Rickettsia</taxon>
        <taxon>belli group</taxon>
    </lineage>
</organism>